<reference key="1">
    <citation type="journal article" date="2004" name="Science">
        <title>The Ashbya gossypii genome as a tool for mapping the ancient Saccharomyces cerevisiae genome.</title>
        <authorList>
            <person name="Dietrich F.S."/>
            <person name="Voegeli S."/>
            <person name="Brachat S."/>
            <person name="Lerch A."/>
            <person name="Gates K."/>
            <person name="Steiner S."/>
            <person name="Mohr C."/>
            <person name="Poehlmann R."/>
            <person name="Luedi P."/>
            <person name="Choi S."/>
            <person name="Wing R.A."/>
            <person name="Flavier A."/>
            <person name="Gaffney T.D."/>
            <person name="Philippsen P."/>
        </authorList>
    </citation>
    <scope>NUCLEOTIDE SEQUENCE [LARGE SCALE GENOMIC DNA]</scope>
    <source>
        <strain>ATCC 10895 / CBS 109.51 / FGSC 9923 / NRRL Y-1056</strain>
    </source>
</reference>
<reference key="2">
    <citation type="journal article" date="2013" name="G3 (Bethesda)">
        <title>Genomes of Ashbya fungi isolated from insects reveal four mating-type loci, numerous translocations, lack of transposons, and distinct gene duplications.</title>
        <authorList>
            <person name="Dietrich F.S."/>
            <person name="Voegeli S."/>
            <person name="Kuo S."/>
            <person name="Philippsen P."/>
        </authorList>
    </citation>
    <scope>GENOME REANNOTATION</scope>
    <source>
        <strain>ATCC 10895 / CBS 109.51 / FGSC 9923 / NRRL Y-1056</strain>
    </source>
</reference>
<proteinExistence type="inferred from homology"/>
<dbReference type="EC" id="2.4.1.131" evidence="1"/>
<dbReference type="EMBL" id="AE016817">
    <property type="protein sequence ID" value="AAS51685.1"/>
    <property type="molecule type" value="Genomic_DNA"/>
</dbReference>
<dbReference type="RefSeq" id="NP_983861.1">
    <property type="nucleotide sequence ID" value="NM_209214.1"/>
</dbReference>
<dbReference type="FunCoup" id="Q75B12">
    <property type="interactions" value="425"/>
</dbReference>
<dbReference type="STRING" id="284811.Q75B12"/>
<dbReference type="CAZy" id="GT4">
    <property type="family name" value="Glycosyltransferase Family 4"/>
</dbReference>
<dbReference type="GlyCosmos" id="Q75B12">
    <property type="glycosylation" value="3 sites, No reported glycans"/>
</dbReference>
<dbReference type="EnsemblFungi" id="AAS51685">
    <property type="protein sequence ID" value="AAS51685"/>
    <property type="gene ID" value="AGOS_ADL235W"/>
</dbReference>
<dbReference type="GeneID" id="4619996"/>
<dbReference type="KEGG" id="ago:AGOS_ADL235W"/>
<dbReference type="eggNOG" id="KOG1387">
    <property type="taxonomic scope" value="Eukaryota"/>
</dbReference>
<dbReference type="HOGENOM" id="CLU_017896_1_1_1"/>
<dbReference type="InParanoid" id="Q75B12"/>
<dbReference type="OMA" id="WKHFTLI"/>
<dbReference type="OrthoDB" id="2276068at2759"/>
<dbReference type="UniPathway" id="UPA00378"/>
<dbReference type="Proteomes" id="UP000000591">
    <property type="component" value="Chromosome IV"/>
</dbReference>
<dbReference type="GO" id="GO:0005789">
    <property type="term" value="C:endoplasmic reticulum membrane"/>
    <property type="evidence" value="ECO:0000318"/>
    <property type="project" value="GO_Central"/>
</dbReference>
<dbReference type="GO" id="GO:0004377">
    <property type="term" value="F:GDP-Man:Man3GlcNAc2-PP-Dol alpha-1,2-mannosyltransferase activity"/>
    <property type="evidence" value="ECO:0000318"/>
    <property type="project" value="GO_Central"/>
</dbReference>
<dbReference type="GO" id="GO:0006488">
    <property type="term" value="P:dolichol-linked oligosaccharide biosynthetic process"/>
    <property type="evidence" value="ECO:0000318"/>
    <property type="project" value="GO_Central"/>
</dbReference>
<dbReference type="CDD" id="cd03806">
    <property type="entry name" value="GT4_ALG11-like"/>
    <property type="match status" value="1"/>
</dbReference>
<dbReference type="Gene3D" id="3.40.50.2000">
    <property type="entry name" value="Glycogen Phosphorylase B"/>
    <property type="match status" value="1"/>
</dbReference>
<dbReference type="InterPro" id="IPR038013">
    <property type="entry name" value="ALG11"/>
</dbReference>
<dbReference type="InterPro" id="IPR031814">
    <property type="entry name" value="ALG11_N"/>
</dbReference>
<dbReference type="InterPro" id="IPR001296">
    <property type="entry name" value="Glyco_trans_1"/>
</dbReference>
<dbReference type="PANTHER" id="PTHR45919">
    <property type="entry name" value="GDP-MAN:MAN(3)GLCNAC(2)-PP-DOL ALPHA-1,2-MANNOSYLTRANSFERASE"/>
    <property type="match status" value="1"/>
</dbReference>
<dbReference type="PANTHER" id="PTHR45919:SF1">
    <property type="entry name" value="GDP-MAN:MAN(3)GLCNAC(2)-PP-DOL ALPHA-1,2-MANNOSYLTRANSFERASE"/>
    <property type="match status" value="1"/>
</dbReference>
<dbReference type="Pfam" id="PF15924">
    <property type="entry name" value="ALG11_N"/>
    <property type="match status" value="1"/>
</dbReference>
<dbReference type="Pfam" id="PF00534">
    <property type="entry name" value="Glycos_transf_1"/>
    <property type="match status" value="1"/>
</dbReference>
<dbReference type="SUPFAM" id="SSF53756">
    <property type="entry name" value="UDP-Glycosyltransferase/glycogen phosphorylase"/>
    <property type="match status" value="1"/>
</dbReference>
<organism>
    <name type="scientific">Eremothecium gossypii (strain ATCC 10895 / CBS 109.51 / FGSC 9923 / NRRL Y-1056)</name>
    <name type="common">Yeast</name>
    <name type="synonym">Ashbya gossypii</name>
    <dbReference type="NCBI Taxonomy" id="284811"/>
    <lineage>
        <taxon>Eukaryota</taxon>
        <taxon>Fungi</taxon>
        <taxon>Dikarya</taxon>
        <taxon>Ascomycota</taxon>
        <taxon>Saccharomycotina</taxon>
        <taxon>Saccharomycetes</taxon>
        <taxon>Saccharomycetales</taxon>
        <taxon>Saccharomycetaceae</taxon>
        <taxon>Eremothecium</taxon>
    </lineage>
</organism>
<keyword id="KW-0256">Endoplasmic reticulum</keyword>
<keyword id="KW-0328">Glycosyltransferase</keyword>
<keyword id="KW-0472">Membrane</keyword>
<keyword id="KW-1185">Reference proteome</keyword>
<keyword id="KW-0808">Transferase</keyword>
<keyword id="KW-0812">Transmembrane</keyword>
<keyword id="KW-1133">Transmembrane helix</keyword>
<gene>
    <name type="primary">ALG11</name>
    <name type="ordered locus">ADL235W</name>
</gene>
<sequence>MESCWLTMESYQAALVVCIVSGLILAVAGYGNVRRLACEFLLKPPKRFRDDICEALLRGPENDQKPVLVDFGWRHGAVRRQMLLASAKASAYSNERHGSKIHISPDDIARGRSFADALDVHRRSGRILFGFFHPFCNAGGGGEKVLWKAVETTLKQSLNNIVVVYTGDCDTTGARILSNVEHRFGSQLDSERIVFIFLRHRKWVESRTWPRMTLLGQALGSIVLSIEAALCCPPDVWCDTMGYPFGYPFVSWLCRIPIITYTHYPVVSIDMLDKLRMMPEFRNSPTLWAKFLYWRIFMRCYTFAGSFVDLAVTNSTWTYNHINAIWSRTGNVSIIYPPCSTENLVIENAHDMWDRKHQAVVIAQFRPEKRHALILRSFSNFVKKTGSNMKLLMLGSTRGQEDRDYVKKLEQLAYSELAIPKESLEFITDCKYEKMKKYLQESSFGINAMWNEHFGIAVVEYAASGLITLAHASAGPLLDIIVPWDIEGDKQLERGSDKNRTGFFFKDRSDPDFCKITAEFPTLEELFVRADQLTDEERLAISQRAKRCVLHKFSDLKFSEDWAQVVDRTIQLLHTLRNDKVE</sequence>
<protein>
    <recommendedName>
        <fullName evidence="1">GDP-Man:Man(3)GlcNAc(2)-PP-Dol alpha-1,2-mannosyltransferase</fullName>
        <ecNumber evidence="1">2.4.1.131</ecNumber>
    </recommendedName>
    <alternativeName>
        <fullName>Alpha-1,2-mannosyltransferase ALG11</fullName>
    </alternativeName>
    <alternativeName>
        <fullName>Asparagine-linked glycosylation protein 11</fullName>
    </alternativeName>
    <alternativeName>
        <fullName>Glycolipid 2-alpha-mannosyltransferase</fullName>
    </alternativeName>
</protein>
<comment type="function">
    <text evidence="1">GDP-Man:Man(3)GlcNAc(2)-PP-Dol alpha-1,2-mannosyltransferase that operates in the biosynthetic pathway of dolichol-linked oligosaccharides, the glycan precursors employed in protein asparagine (N)-glycosylation. The assembly of dolichol-linked oligosaccharides begins on the cytosolic side of the endoplasmic reticulum membrane and finishes in its lumen. The sequential addition of sugars to dolichol pyrophosphate produces dolichol-linked oligosaccharides containing fourteen sugars, including two GlcNAcs, nine mannoses and three glucoses. Once assembled, the oligosaccharide is transferred from the lipid to nascent proteins by oligosaccharyltransferases. Catalyzes, on the cytoplasmic face of the endoplasmic reticulum, the addition of the fourth and fifth mannose residues to the dolichol-linked oligosaccharide chain, to produce Man(5)GlcNAc(2)-PP-dolichol core oligosaccharide.</text>
</comment>
<comment type="catalytic activity">
    <reaction evidence="1">
        <text>an alpha-D-Man-(1-&gt;3)-[alpha-D-Man-(1-&gt;6)]-beta-D-Man-(1-&gt;4)-beta-D-GlcNAc-(1-&gt;4)-alpha-D-GlcNAc-diphospho-di-trans,poly-cis-dolichol + 2 GDP-alpha-D-mannose = an alpha-D-Man-(1-&gt;2)-alpha-D-Man-(1-&gt;2)-alpha-D-Man-(1-&gt;3)-[alpha-D-Man-(1-&gt;6)]-beta-D-Man-(1-&gt;4)-beta-D-GlcNAc-(1-&gt;4)-alpha-D-GlcNAc-diphospho-di-trans,poly-cis-dolichol + 2 GDP + 2 H(+)</text>
        <dbReference type="Rhea" id="RHEA:29523"/>
        <dbReference type="Rhea" id="RHEA-COMP:19515"/>
        <dbReference type="Rhea" id="RHEA-COMP:19516"/>
        <dbReference type="ChEBI" id="CHEBI:15378"/>
        <dbReference type="ChEBI" id="CHEBI:57527"/>
        <dbReference type="ChEBI" id="CHEBI:58189"/>
        <dbReference type="ChEBI" id="CHEBI:132511"/>
        <dbReference type="ChEBI" id="CHEBI:132515"/>
        <dbReference type="EC" id="2.4.1.131"/>
    </reaction>
    <physiologicalReaction direction="left-to-right" evidence="1">
        <dbReference type="Rhea" id="RHEA:29524"/>
    </physiologicalReaction>
</comment>
<comment type="pathway">
    <text evidence="1">Protein modification; protein glycosylation.</text>
</comment>
<comment type="subcellular location">
    <subcellularLocation>
        <location evidence="1">Endoplasmic reticulum membrane</location>
        <topology evidence="1">Single-pass membrane protein</topology>
    </subcellularLocation>
</comment>
<comment type="similarity">
    <text evidence="3">Belongs to the glycosyltransferase group 1 family.</text>
</comment>
<accession>Q75B12</accession>
<feature type="chain" id="PRO_0000080272" description="GDP-Man:Man(3)GlcNAc(2)-PP-Dol alpha-1,2-mannosyltransferase">
    <location>
        <begin position="1"/>
        <end position="582"/>
    </location>
</feature>
<feature type="topological domain" description="Lumenal" evidence="1">
    <location>
        <begin position="1"/>
        <end position="12"/>
    </location>
</feature>
<feature type="transmembrane region" description="Helical" evidence="2">
    <location>
        <begin position="13"/>
        <end position="33"/>
    </location>
</feature>
<feature type="topological domain" description="Cytoplasmic" evidence="1">
    <location>
        <begin position="34"/>
        <end position="240"/>
    </location>
</feature>
<feature type="intramembrane region" description="Helical" evidence="2">
    <location>
        <begin position="241"/>
        <end position="261"/>
    </location>
</feature>
<feature type="topological domain" description="Cytoplasmic" evidence="1">
    <location>
        <begin position="262"/>
        <end position="461"/>
    </location>
</feature>
<feature type="intramembrane region" description="Helical" evidence="2">
    <location>
        <begin position="462"/>
        <end position="482"/>
    </location>
</feature>
<feature type="topological domain" description="Cytoplasmic" evidence="1">
    <location>
        <begin position="483"/>
        <end position="582"/>
    </location>
</feature>
<evidence type="ECO:0000250" key="1">
    <source>
        <dbReference type="UniProtKB" id="P53954"/>
    </source>
</evidence>
<evidence type="ECO:0000255" key="2"/>
<evidence type="ECO:0000305" key="3"/>
<name>ALG11_EREGS</name>